<protein>
    <recommendedName>
        <fullName evidence="5">Toxin 3FTx-Tri2</fullName>
    </recommendedName>
</protein>
<dbReference type="EMBL" id="EU029677">
    <property type="protein sequence ID" value="ABU68477.1"/>
    <property type="molecule type" value="mRNA"/>
</dbReference>
<dbReference type="SMR" id="A7X3S0"/>
<dbReference type="GO" id="GO:0005576">
    <property type="term" value="C:extracellular region"/>
    <property type="evidence" value="ECO:0007669"/>
    <property type="project" value="UniProtKB-SubCell"/>
</dbReference>
<dbReference type="GO" id="GO:0030550">
    <property type="term" value="F:acetylcholine receptor inhibitor activity"/>
    <property type="evidence" value="ECO:0007669"/>
    <property type="project" value="UniProtKB-KW"/>
</dbReference>
<dbReference type="GO" id="GO:0099106">
    <property type="term" value="F:ion channel regulator activity"/>
    <property type="evidence" value="ECO:0007669"/>
    <property type="project" value="UniProtKB-KW"/>
</dbReference>
<dbReference type="GO" id="GO:0090729">
    <property type="term" value="F:toxin activity"/>
    <property type="evidence" value="ECO:0007669"/>
    <property type="project" value="UniProtKB-KW"/>
</dbReference>
<dbReference type="CDD" id="cd00206">
    <property type="entry name" value="TFP_snake_toxin"/>
    <property type="match status" value="1"/>
</dbReference>
<dbReference type="Gene3D" id="2.10.60.10">
    <property type="entry name" value="CD59"/>
    <property type="match status" value="1"/>
</dbReference>
<dbReference type="InterPro" id="IPR003571">
    <property type="entry name" value="Snake_3FTx"/>
</dbReference>
<dbReference type="InterPro" id="IPR045860">
    <property type="entry name" value="Snake_toxin-like_sf"/>
</dbReference>
<dbReference type="InterPro" id="IPR018354">
    <property type="entry name" value="Snake_toxin_con_site"/>
</dbReference>
<dbReference type="InterPro" id="IPR054131">
    <property type="entry name" value="Toxin_cobra-type"/>
</dbReference>
<dbReference type="Pfam" id="PF21947">
    <property type="entry name" value="Toxin_cobra-type"/>
    <property type="match status" value="1"/>
</dbReference>
<dbReference type="SUPFAM" id="SSF57302">
    <property type="entry name" value="Snake toxin-like"/>
    <property type="match status" value="1"/>
</dbReference>
<dbReference type="PROSITE" id="PS00272">
    <property type="entry name" value="SNAKE_TOXIN"/>
    <property type="match status" value="1"/>
</dbReference>
<feature type="signal peptide" evidence="3">
    <location>
        <begin position="1"/>
        <end position="19"/>
    </location>
</feature>
<feature type="propeptide" id="PRO_0000316189" evidence="1">
    <location>
        <begin position="20"/>
        <end position="34"/>
    </location>
</feature>
<feature type="chain" id="PRO_0000316190" description="Toxin 3FTx-Tri2">
    <location>
        <begin position="35"/>
        <end position="111"/>
    </location>
</feature>
<feature type="modified residue" description="Pyrrolidone carboxylic acid" evidence="1">
    <location>
        <position position="35"/>
    </location>
</feature>
<feature type="disulfide bond" evidence="2">
    <location>
        <begin position="44"/>
        <end position="68"/>
    </location>
</feature>
<feature type="disulfide bond" evidence="2">
    <location>
        <begin position="47"/>
        <end position="55"/>
    </location>
</feature>
<feature type="disulfide bond" evidence="2">
    <location>
        <begin position="61"/>
        <end position="87"/>
    </location>
</feature>
<feature type="disulfide bond" evidence="2">
    <location>
        <begin position="91"/>
        <end position="102"/>
    </location>
</feature>
<feature type="disulfide bond" evidence="2">
    <location>
        <begin position="103"/>
        <end position="108"/>
    </location>
</feature>
<accession>A7X3S0</accession>
<comment type="function">
    <text evidence="1">Potent postsynaptic neurotoxin. Displays readily reversible competitive antagonism at the nicotinic acetylcholine receptor (nAChR).</text>
</comment>
<comment type="subcellular location">
    <subcellularLocation>
        <location evidence="1">Secreted</location>
    </subcellularLocation>
</comment>
<comment type="tissue specificity">
    <text evidence="4">Expressed by the venom gland.</text>
</comment>
<comment type="similarity">
    <text evidence="4">Belongs to the three-finger toxin family. Ancestral subfamily. Boigatoxin sub-subfamily.</text>
</comment>
<keyword id="KW-0008">Acetylcholine receptor inhibiting toxin</keyword>
<keyword id="KW-1015">Disulfide bond</keyword>
<keyword id="KW-0872">Ion channel impairing toxin</keyword>
<keyword id="KW-0528">Neurotoxin</keyword>
<keyword id="KW-0629">Postsynaptic neurotoxin</keyword>
<keyword id="KW-0873">Pyrrolidone carboxylic acid</keyword>
<keyword id="KW-0964">Secreted</keyword>
<keyword id="KW-0732">Signal</keyword>
<keyword id="KW-0800">Toxin</keyword>
<organism>
    <name type="scientific">Trimorphodon biscutatus</name>
    <name type="common">Western lyre snake</name>
    <dbReference type="NCBI Taxonomy" id="338818"/>
    <lineage>
        <taxon>Eukaryota</taxon>
        <taxon>Metazoa</taxon>
        <taxon>Chordata</taxon>
        <taxon>Craniata</taxon>
        <taxon>Vertebrata</taxon>
        <taxon>Euteleostomi</taxon>
        <taxon>Lepidosauria</taxon>
        <taxon>Squamata</taxon>
        <taxon>Bifurcata</taxon>
        <taxon>Unidentata</taxon>
        <taxon>Episquamata</taxon>
        <taxon>Toxicofera</taxon>
        <taxon>Serpentes</taxon>
        <taxon>Colubroidea</taxon>
        <taxon>Colubridae</taxon>
        <taxon>Colubrinae</taxon>
        <taxon>Trimorphodon</taxon>
    </lineage>
</organism>
<name>3NB2_TRIBI</name>
<reference key="1">
    <citation type="journal article" date="2008" name="Mol. Cell. Proteomics">
        <title>Evolution of an arsenal: structural and functional diversification of the venom system in the advanced snakes (Caenophidia).</title>
        <authorList>
            <person name="Fry B.G."/>
            <person name="Scheib H."/>
            <person name="van der Weerd L."/>
            <person name="Young B."/>
            <person name="McNaughtan J."/>
            <person name="Ramjan S.F.R."/>
            <person name="Vidal N."/>
            <person name="Poelmann R.E."/>
            <person name="Norman J.A."/>
        </authorList>
    </citation>
    <scope>NUCLEOTIDE SEQUENCE [LARGE SCALE MRNA]</scope>
    <source>
        <tissue>Venom gland</tissue>
    </source>
</reference>
<evidence type="ECO:0000250" key="1"/>
<evidence type="ECO:0000250" key="2">
    <source>
        <dbReference type="UniProtKB" id="P81782"/>
    </source>
</evidence>
<evidence type="ECO:0000255" key="3"/>
<evidence type="ECO:0000305" key="4"/>
<evidence type="ECO:0000312" key="5">
    <source>
        <dbReference type="EMBL" id="ABU68477.1"/>
    </source>
</evidence>
<sequence>MKTLLLALVVLAFVCLGSADQVGLGKEQIDRGRRQAIGPPFTRCSQCNRNRSPQCFIEDRCTPGDFTCYTVYKPNGNGGEDWVVKGCAKTCPTAGPGERVKCCYSPRCNKN</sequence>
<proteinExistence type="inferred from homology"/>